<protein>
    <recommendedName>
        <fullName evidence="1">Dihydroxy-acid dehydratase</fullName>
        <shortName evidence="1">DAD</shortName>
        <ecNumber evidence="1">4.2.1.9</ecNumber>
    </recommendedName>
</protein>
<sequence>MKKVLNKYSRRLTEDKSQGASQAMLYGTEMNDADMHKPQIGIGSVWYEGNTCNMHLNQLAQFVKDSVEKENLKGMRFNTIGVSDGISMGTDGMSYSLQSRDLIADSIETVMSAHWYDGLVSIPGCDKNMPGCMMALGRLNRPGFVIYGGTIQAGVMRGKPIDIVTAFQSYGACLSGQITEQERQETIKKACPGAGACGGMYTANTMACAIEALGMSLPFSSSTSATSVEKVQECDKAGETIKNLLELDIKPRDIMTRKAFENAMVLITVMGGSTNAVLHLLAMASSVDVDLSIDDFQEIANKTPVLADFKPSGKYVKANLHAIGGTPAVMKMLLKAGMLHGDCLTVTGKTLAENLENVADLPEDNTIIHKLDNPIKKTGHLQILKGNVAPEGSVAKITGKEGEIFEGVANVFDSEEEMVAAVETGKVKKGDVIVIRYEGPKGGPGMPEMLKPTSLIMGAGLGQDVALITDGRFSGGSHGFIVGHITPEAYEGGMIALLENGDKITIDAINNVINVDLSDQEIAQRKSKWRASKQKASRGTLKKYIKTVSSA</sequence>
<gene>
    <name evidence="1" type="primary">ilvD</name>
    <name type="ordered locus">FTT_0640</name>
</gene>
<proteinExistence type="inferred from homology"/>
<accession>Q5NH32</accession>
<feature type="chain" id="PRO_0000225392" description="Dihydroxy-acid dehydratase">
    <location>
        <begin position="1"/>
        <end position="551"/>
    </location>
</feature>
<feature type="active site" description="Proton acceptor" evidence="1">
    <location>
        <position position="474"/>
    </location>
</feature>
<feature type="binding site" evidence="1">
    <location>
        <position position="52"/>
    </location>
    <ligand>
        <name>[2Fe-2S] cluster</name>
        <dbReference type="ChEBI" id="CHEBI:190135"/>
    </ligand>
</feature>
<feature type="binding site" evidence="1">
    <location>
        <position position="84"/>
    </location>
    <ligand>
        <name>Mg(2+)</name>
        <dbReference type="ChEBI" id="CHEBI:18420"/>
    </ligand>
</feature>
<feature type="binding site" evidence="1">
    <location>
        <position position="125"/>
    </location>
    <ligand>
        <name>[2Fe-2S] cluster</name>
        <dbReference type="ChEBI" id="CHEBI:190135"/>
    </ligand>
</feature>
<feature type="binding site" evidence="1">
    <location>
        <position position="126"/>
    </location>
    <ligand>
        <name>Mg(2+)</name>
        <dbReference type="ChEBI" id="CHEBI:18420"/>
    </ligand>
</feature>
<feature type="binding site" description="via carbamate group" evidence="1">
    <location>
        <position position="127"/>
    </location>
    <ligand>
        <name>Mg(2+)</name>
        <dbReference type="ChEBI" id="CHEBI:18420"/>
    </ligand>
</feature>
<feature type="binding site" evidence="1">
    <location>
        <position position="197"/>
    </location>
    <ligand>
        <name>[2Fe-2S] cluster</name>
        <dbReference type="ChEBI" id="CHEBI:190135"/>
    </ligand>
</feature>
<feature type="binding site" evidence="1">
    <location>
        <position position="448"/>
    </location>
    <ligand>
        <name>Mg(2+)</name>
        <dbReference type="ChEBI" id="CHEBI:18420"/>
    </ligand>
</feature>
<feature type="modified residue" description="N6-carboxylysine" evidence="1">
    <location>
        <position position="127"/>
    </location>
</feature>
<reference key="1">
    <citation type="journal article" date="2005" name="Nat. Genet.">
        <title>The complete genome sequence of Francisella tularensis, the causative agent of tularemia.</title>
        <authorList>
            <person name="Larsson P."/>
            <person name="Oyston P.C.F."/>
            <person name="Chain P."/>
            <person name="Chu M.C."/>
            <person name="Duffield M."/>
            <person name="Fuxelius H.-H."/>
            <person name="Garcia E."/>
            <person name="Haelltorp G."/>
            <person name="Johansson D."/>
            <person name="Isherwood K.E."/>
            <person name="Karp P.D."/>
            <person name="Larsson E."/>
            <person name="Liu Y."/>
            <person name="Michell S."/>
            <person name="Prior J."/>
            <person name="Prior R."/>
            <person name="Malfatti S."/>
            <person name="Sjoestedt A."/>
            <person name="Svensson K."/>
            <person name="Thompson N."/>
            <person name="Vergez L."/>
            <person name="Wagg J.K."/>
            <person name="Wren B.W."/>
            <person name="Lindler L.E."/>
            <person name="Andersson S.G.E."/>
            <person name="Forsman M."/>
            <person name="Titball R.W."/>
        </authorList>
    </citation>
    <scope>NUCLEOTIDE SEQUENCE [LARGE SCALE GENOMIC DNA]</scope>
    <source>
        <strain>SCHU S4 / Schu 4</strain>
    </source>
</reference>
<organism>
    <name type="scientific">Francisella tularensis subsp. tularensis (strain SCHU S4 / Schu 4)</name>
    <dbReference type="NCBI Taxonomy" id="177416"/>
    <lineage>
        <taxon>Bacteria</taxon>
        <taxon>Pseudomonadati</taxon>
        <taxon>Pseudomonadota</taxon>
        <taxon>Gammaproteobacteria</taxon>
        <taxon>Thiotrichales</taxon>
        <taxon>Francisellaceae</taxon>
        <taxon>Francisella</taxon>
    </lineage>
</organism>
<evidence type="ECO:0000255" key="1">
    <source>
        <dbReference type="HAMAP-Rule" id="MF_00012"/>
    </source>
</evidence>
<name>ILVD_FRATT</name>
<comment type="function">
    <text evidence="1">Functions in the biosynthesis of branched-chain amino acids. Catalyzes the dehydration of (2R,3R)-2,3-dihydroxy-3-methylpentanoate (2,3-dihydroxy-3-methylvalerate) into 2-oxo-3-methylpentanoate (2-oxo-3-methylvalerate) and of (2R)-2,3-dihydroxy-3-methylbutanoate (2,3-dihydroxyisovalerate) into 2-oxo-3-methylbutanoate (2-oxoisovalerate), the penultimate precursor to L-isoleucine and L-valine, respectively.</text>
</comment>
<comment type="catalytic activity">
    <reaction evidence="1">
        <text>(2R)-2,3-dihydroxy-3-methylbutanoate = 3-methyl-2-oxobutanoate + H2O</text>
        <dbReference type="Rhea" id="RHEA:24809"/>
        <dbReference type="ChEBI" id="CHEBI:11851"/>
        <dbReference type="ChEBI" id="CHEBI:15377"/>
        <dbReference type="ChEBI" id="CHEBI:49072"/>
        <dbReference type="EC" id="4.2.1.9"/>
    </reaction>
    <physiologicalReaction direction="left-to-right" evidence="1">
        <dbReference type="Rhea" id="RHEA:24810"/>
    </physiologicalReaction>
</comment>
<comment type="catalytic activity">
    <reaction evidence="1">
        <text>(2R,3R)-2,3-dihydroxy-3-methylpentanoate = (S)-3-methyl-2-oxopentanoate + H2O</text>
        <dbReference type="Rhea" id="RHEA:27694"/>
        <dbReference type="ChEBI" id="CHEBI:15377"/>
        <dbReference type="ChEBI" id="CHEBI:35146"/>
        <dbReference type="ChEBI" id="CHEBI:49258"/>
        <dbReference type="EC" id="4.2.1.9"/>
    </reaction>
    <physiologicalReaction direction="left-to-right" evidence="1">
        <dbReference type="Rhea" id="RHEA:27695"/>
    </physiologicalReaction>
</comment>
<comment type="cofactor">
    <cofactor evidence="1">
        <name>[2Fe-2S] cluster</name>
        <dbReference type="ChEBI" id="CHEBI:190135"/>
    </cofactor>
    <text evidence="1">Binds 1 [2Fe-2S] cluster per subunit. This cluster acts as a Lewis acid cofactor.</text>
</comment>
<comment type="cofactor">
    <cofactor evidence="1">
        <name>Mg(2+)</name>
        <dbReference type="ChEBI" id="CHEBI:18420"/>
    </cofactor>
</comment>
<comment type="pathway">
    <text evidence="1">Amino-acid biosynthesis; L-isoleucine biosynthesis; L-isoleucine from 2-oxobutanoate: step 3/4.</text>
</comment>
<comment type="pathway">
    <text evidence="1">Amino-acid biosynthesis; L-valine biosynthesis; L-valine from pyruvate: step 3/4.</text>
</comment>
<comment type="subunit">
    <text evidence="1">Homodimer.</text>
</comment>
<comment type="similarity">
    <text evidence="1">Belongs to the IlvD/Edd family.</text>
</comment>
<keyword id="KW-0001">2Fe-2S</keyword>
<keyword id="KW-0028">Amino-acid biosynthesis</keyword>
<keyword id="KW-0100">Branched-chain amino acid biosynthesis</keyword>
<keyword id="KW-0408">Iron</keyword>
<keyword id="KW-0411">Iron-sulfur</keyword>
<keyword id="KW-0456">Lyase</keyword>
<keyword id="KW-0460">Magnesium</keyword>
<keyword id="KW-0479">Metal-binding</keyword>
<keyword id="KW-1185">Reference proteome</keyword>
<dbReference type="EC" id="4.2.1.9" evidence="1"/>
<dbReference type="EMBL" id="AJ749949">
    <property type="protein sequence ID" value="CAG45273.1"/>
    <property type="molecule type" value="Genomic_DNA"/>
</dbReference>
<dbReference type="RefSeq" id="WP_003020386.1">
    <property type="nucleotide sequence ID" value="NC_006570.2"/>
</dbReference>
<dbReference type="RefSeq" id="YP_169660.1">
    <property type="nucleotide sequence ID" value="NC_006570.2"/>
</dbReference>
<dbReference type="SMR" id="Q5NH32"/>
<dbReference type="IntAct" id="Q5NH32">
    <property type="interactions" value="6"/>
</dbReference>
<dbReference type="STRING" id="177416.FTT_0640"/>
<dbReference type="DNASU" id="3191790"/>
<dbReference type="EnsemblBacteria" id="CAG45273">
    <property type="protein sequence ID" value="CAG45273"/>
    <property type="gene ID" value="FTT_0640"/>
</dbReference>
<dbReference type="KEGG" id="ftu:FTT_0640"/>
<dbReference type="eggNOG" id="COG0129">
    <property type="taxonomic scope" value="Bacteria"/>
</dbReference>
<dbReference type="OrthoDB" id="9807077at2"/>
<dbReference type="UniPathway" id="UPA00047">
    <property type="reaction ID" value="UER00057"/>
</dbReference>
<dbReference type="UniPathway" id="UPA00049">
    <property type="reaction ID" value="UER00061"/>
</dbReference>
<dbReference type="Proteomes" id="UP000001174">
    <property type="component" value="Chromosome"/>
</dbReference>
<dbReference type="GO" id="GO:0051537">
    <property type="term" value="F:2 iron, 2 sulfur cluster binding"/>
    <property type="evidence" value="ECO:0007669"/>
    <property type="project" value="UniProtKB-UniRule"/>
</dbReference>
<dbReference type="GO" id="GO:0004160">
    <property type="term" value="F:dihydroxy-acid dehydratase activity"/>
    <property type="evidence" value="ECO:0007669"/>
    <property type="project" value="UniProtKB-UniRule"/>
</dbReference>
<dbReference type="GO" id="GO:0000287">
    <property type="term" value="F:magnesium ion binding"/>
    <property type="evidence" value="ECO:0007669"/>
    <property type="project" value="UniProtKB-UniRule"/>
</dbReference>
<dbReference type="GO" id="GO:0009097">
    <property type="term" value="P:isoleucine biosynthetic process"/>
    <property type="evidence" value="ECO:0007669"/>
    <property type="project" value="UniProtKB-UniRule"/>
</dbReference>
<dbReference type="GO" id="GO:0009099">
    <property type="term" value="P:L-valine biosynthetic process"/>
    <property type="evidence" value="ECO:0007669"/>
    <property type="project" value="UniProtKB-UniRule"/>
</dbReference>
<dbReference type="FunFam" id="3.50.30.80:FF:000001">
    <property type="entry name" value="Dihydroxy-acid dehydratase"/>
    <property type="match status" value="1"/>
</dbReference>
<dbReference type="Gene3D" id="3.50.30.80">
    <property type="entry name" value="IlvD/EDD C-terminal domain-like"/>
    <property type="match status" value="1"/>
</dbReference>
<dbReference type="HAMAP" id="MF_00012">
    <property type="entry name" value="IlvD"/>
    <property type="match status" value="1"/>
</dbReference>
<dbReference type="InterPro" id="IPR050165">
    <property type="entry name" value="DHAD_IlvD/Edd"/>
</dbReference>
<dbReference type="InterPro" id="IPR042096">
    <property type="entry name" value="Dihydro-acid_dehy_C"/>
</dbReference>
<dbReference type="InterPro" id="IPR004404">
    <property type="entry name" value="DihydroxyA_deHydtase"/>
</dbReference>
<dbReference type="InterPro" id="IPR020558">
    <property type="entry name" value="DiOHA_6PGluconate_deHydtase_CS"/>
</dbReference>
<dbReference type="InterPro" id="IPR056740">
    <property type="entry name" value="ILV_EDD_C"/>
</dbReference>
<dbReference type="InterPro" id="IPR000581">
    <property type="entry name" value="ILV_EDD_N"/>
</dbReference>
<dbReference type="InterPro" id="IPR037237">
    <property type="entry name" value="IlvD/EDD_N"/>
</dbReference>
<dbReference type="NCBIfam" id="TIGR00110">
    <property type="entry name" value="ilvD"/>
    <property type="match status" value="1"/>
</dbReference>
<dbReference type="NCBIfam" id="NF002068">
    <property type="entry name" value="PRK00911.1"/>
    <property type="match status" value="1"/>
</dbReference>
<dbReference type="PANTHER" id="PTHR21000">
    <property type="entry name" value="DIHYDROXY-ACID DEHYDRATASE DAD"/>
    <property type="match status" value="1"/>
</dbReference>
<dbReference type="PANTHER" id="PTHR21000:SF5">
    <property type="entry name" value="DIHYDROXY-ACID DEHYDRATASE, MITOCHONDRIAL"/>
    <property type="match status" value="1"/>
</dbReference>
<dbReference type="Pfam" id="PF24877">
    <property type="entry name" value="ILV_EDD_C"/>
    <property type="match status" value="1"/>
</dbReference>
<dbReference type="Pfam" id="PF00920">
    <property type="entry name" value="ILVD_EDD_N"/>
    <property type="match status" value="1"/>
</dbReference>
<dbReference type="SUPFAM" id="SSF143975">
    <property type="entry name" value="IlvD/EDD N-terminal domain-like"/>
    <property type="match status" value="1"/>
</dbReference>
<dbReference type="SUPFAM" id="SSF52016">
    <property type="entry name" value="LeuD/IlvD-like"/>
    <property type="match status" value="1"/>
</dbReference>
<dbReference type="PROSITE" id="PS00886">
    <property type="entry name" value="ILVD_EDD_1"/>
    <property type="match status" value="1"/>
</dbReference>
<dbReference type="PROSITE" id="PS00887">
    <property type="entry name" value="ILVD_EDD_2"/>
    <property type="match status" value="1"/>
</dbReference>